<protein>
    <recommendedName>
        <fullName evidence="1">ATP synthase subunit beta 3</fullName>
        <ecNumber evidence="1">7.1.2.2</ecNumber>
    </recommendedName>
    <alternativeName>
        <fullName evidence="1">ATP synthase F1 sector subunit beta 3</fullName>
    </alternativeName>
    <alternativeName>
        <fullName evidence="1">F-ATPase subunit beta 3</fullName>
    </alternativeName>
</protein>
<comment type="function">
    <text evidence="1">Produces ATP from ADP in the presence of a proton gradient across the membrane. The catalytic sites are hosted primarily by the beta subunits.</text>
</comment>
<comment type="catalytic activity">
    <reaction evidence="1">
        <text>ATP + H2O + 4 H(+)(in) = ADP + phosphate + 5 H(+)(out)</text>
        <dbReference type="Rhea" id="RHEA:57720"/>
        <dbReference type="ChEBI" id="CHEBI:15377"/>
        <dbReference type="ChEBI" id="CHEBI:15378"/>
        <dbReference type="ChEBI" id="CHEBI:30616"/>
        <dbReference type="ChEBI" id="CHEBI:43474"/>
        <dbReference type="ChEBI" id="CHEBI:456216"/>
        <dbReference type="EC" id="7.1.2.2"/>
    </reaction>
</comment>
<comment type="subunit">
    <text evidence="1">F-type ATPases have 2 components, CF(1) - the catalytic core - and CF(0) - the membrane proton channel. CF(1) has five subunits: alpha(3), beta(3), gamma(1), delta(1), epsilon(1). CF(0) has three main subunits: a(1), b(2) and c(9-12). The alpha and beta chains form an alternating ring which encloses part of the gamma chain. CF(1) is attached to CF(0) by a central stalk formed by the gamma and epsilon chains, while a peripheral stalk is formed by the delta and b chains.</text>
</comment>
<comment type="subcellular location">
    <subcellularLocation>
        <location evidence="1">Cell inner membrane</location>
        <topology evidence="1">Peripheral membrane protein</topology>
    </subcellularLocation>
</comment>
<comment type="similarity">
    <text evidence="1">Belongs to the ATPase alpha/beta chains family.</text>
</comment>
<gene>
    <name evidence="1" type="primary">atpD3</name>
    <name type="ordered locus">Pcar_3131</name>
</gene>
<evidence type="ECO:0000255" key="1">
    <source>
        <dbReference type="HAMAP-Rule" id="MF_01347"/>
    </source>
</evidence>
<dbReference type="EC" id="7.1.2.2" evidence="1"/>
<dbReference type="EMBL" id="CP000142">
    <property type="protein sequence ID" value="ABA90366.1"/>
    <property type="molecule type" value="Genomic_DNA"/>
</dbReference>
<dbReference type="RefSeq" id="WP_011342926.1">
    <property type="nucleotide sequence ID" value="NC_007498.2"/>
</dbReference>
<dbReference type="SMR" id="Q39ZU1"/>
<dbReference type="STRING" id="338963.Pcar_3131"/>
<dbReference type="KEGG" id="pca:Pcar_3131"/>
<dbReference type="eggNOG" id="COG0055">
    <property type="taxonomic scope" value="Bacteria"/>
</dbReference>
<dbReference type="HOGENOM" id="CLU_022398_0_2_7"/>
<dbReference type="OrthoDB" id="9801639at2"/>
<dbReference type="Proteomes" id="UP000002534">
    <property type="component" value="Chromosome"/>
</dbReference>
<dbReference type="GO" id="GO:0005886">
    <property type="term" value="C:plasma membrane"/>
    <property type="evidence" value="ECO:0007669"/>
    <property type="project" value="UniProtKB-SubCell"/>
</dbReference>
<dbReference type="GO" id="GO:0045259">
    <property type="term" value="C:proton-transporting ATP synthase complex"/>
    <property type="evidence" value="ECO:0007669"/>
    <property type="project" value="UniProtKB-KW"/>
</dbReference>
<dbReference type="GO" id="GO:0005524">
    <property type="term" value="F:ATP binding"/>
    <property type="evidence" value="ECO:0007669"/>
    <property type="project" value="UniProtKB-UniRule"/>
</dbReference>
<dbReference type="GO" id="GO:0016887">
    <property type="term" value="F:ATP hydrolysis activity"/>
    <property type="evidence" value="ECO:0007669"/>
    <property type="project" value="InterPro"/>
</dbReference>
<dbReference type="GO" id="GO:0046933">
    <property type="term" value="F:proton-transporting ATP synthase activity, rotational mechanism"/>
    <property type="evidence" value="ECO:0007669"/>
    <property type="project" value="UniProtKB-UniRule"/>
</dbReference>
<dbReference type="CDD" id="cd18110">
    <property type="entry name" value="ATP-synt_F1_beta_C"/>
    <property type="match status" value="1"/>
</dbReference>
<dbReference type="CDD" id="cd18115">
    <property type="entry name" value="ATP-synt_F1_beta_N"/>
    <property type="match status" value="1"/>
</dbReference>
<dbReference type="CDD" id="cd01133">
    <property type="entry name" value="F1-ATPase_beta_CD"/>
    <property type="match status" value="1"/>
</dbReference>
<dbReference type="FunFam" id="1.10.1140.10:FF:000001">
    <property type="entry name" value="ATP synthase subunit beta"/>
    <property type="match status" value="1"/>
</dbReference>
<dbReference type="FunFam" id="2.40.10.170:FF:000005">
    <property type="entry name" value="ATP synthase subunit beta"/>
    <property type="match status" value="1"/>
</dbReference>
<dbReference type="FunFam" id="3.40.50.300:FF:000026">
    <property type="entry name" value="ATP synthase subunit beta"/>
    <property type="match status" value="1"/>
</dbReference>
<dbReference type="Gene3D" id="2.40.10.170">
    <property type="match status" value="1"/>
</dbReference>
<dbReference type="Gene3D" id="1.10.1140.10">
    <property type="entry name" value="Bovine Mitochondrial F1-atpase, Atp Synthase Beta Chain, Chain D, domain 3"/>
    <property type="match status" value="1"/>
</dbReference>
<dbReference type="Gene3D" id="3.40.50.300">
    <property type="entry name" value="P-loop containing nucleotide triphosphate hydrolases"/>
    <property type="match status" value="1"/>
</dbReference>
<dbReference type="HAMAP" id="MF_01347">
    <property type="entry name" value="ATP_synth_beta_bact"/>
    <property type="match status" value="1"/>
</dbReference>
<dbReference type="InterPro" id="IPR003593">
    <property type="entry name" value="AAA+_ATPase"/>
</dbReference>
<dbReference type="InterPro" id="IPR055190">
    <property type="entry name" value="ATP-synt_VA_C"/>
</dbReference>
<dbReference type="InterPro" id="IPR005722">
    <property type="entry name" value="ATP_synth_F1_bsu"/>
</dbReference>
<dbReference type="InterPro" id="IPR020003">
    <property type="entry name" value="ATPase_a/bsu_AS"/>
</dbReference>
<dbReference type="InterPro" id="IPR050053">
    <property type="entry name" value="ATPase_alpha/beta_chains"/>
</dbReference>
<dbReference type="InterPro" id="IPR004100">
    <property type="entry name" value="ATPase_F1/V1/A1_a/bsu_N"/>
</dbReference>
<dbReference type="InterPro" id="IPR036121">
    <property type="entry name" value="ATPase_F1/V1/A1_a/bsu_N_sf"/>
</dbReference>
<dbReference type="InterPro" id="IPR000194">
    <property type="entry name" value="ATPase_F1/V1/A1_a/bsu_nucl-bd"/>
</dbReference>
<dbReference type="InterPro" id="IPR024034">
    <property type="entry name" value="ATPase_F1/V1_b/a_C"/>
</dbReference>
<dbReference type="InterPro" id="IPR027417">
    <property type="entry name" value="P-loop_NTPase"/>
</dbReference>
<dbReference type="NCBIfam" id="TIGR01039">
    <property type="entry name" value="atpD"/>
    <property type="match status" value="1"/>
</dbReference>
<dbReference type="PANTHER" id="PTHR15184">
    <property type="entry name" value="ATP SYNTHASE"/>
    <property type="match status" value="1"/>
</dbReference>
<dbReference type="PANTHER" id="PTHR15184:SF71">
    <property type="entry name" value="ATP SYNTHASE SUBUNIT BETA, MITOCHONDRIAL"/>
    <property type="match status" value="1"/>
</dbReference>
<dbReference type="Pfam" id="PF00006">
    <property type="entry name" value="ATP-synt_ab"/>
    <property type="match status" value="1"/>
</dbReference>
<dbReference type="Pfam" id="PF02874">
    <property type="entry name" value="ATP-synt_ab_N"/>
    <property type="match status" value="1"/>
</dbReference>
<dbReference type="Pfam" id="PF22919">
    <property type="entry name" value="ATP-synt_VA_C"/>
    <property type="match status" value="1"/>
</dbReference>
<dbReference type="PIRSF" id="PIRSF039072">
    <property type="entry name" value="ATPase_subunit_beta"/>
    <property type="match status" value="1"/>
</dbReference>
<dbReference type="SMART" id="SM00382">
    <property type="entry name" value="AAA"/>
    <property type="match status" value="1"/>
</dbReference>
<dbReference type="SUPFAM" id="SSF47917">
    <property type="entry name" value="C-terminal domain of alpha and beta subunits of F1 ATP synthase"/>
    <property type="match status" value="1"/>
</dbReference>
<dbReference type="SUPFAM" id="SSF50615">
    <property type="entry name" value="N-terminal domain of alpha and beta subunits of F1 ATP synthase"/>
    <property type="match status" value="1"/>
</dbReference>
<dbReference type="SUPFAM" id="SSF52540">
    <property type="entry name" value="P-loop containing nucleoside triphosphate hydrolases"/>
    <property type="match status" value="1"/>
</dbReference>
<dbReference type="PROSITE" id="PS00152">
    <property type="entry name" value="ATPASE_ALPHA_BETA"/>
    <property type="match status" value="1"/>
</dbReference>
<name>ATPB3_SYNC1</name>
<proteinExistence type="inferred from homology"/>
<sequence length="468" mass="51125">MSNGKITQVIGPVIDVEFEAGELPEIYYALKVSNPSLGDEPWNLVAEVAQHLGENTVRAIAMDSTDGLVRGQEVLNTGRQISVPVGRGTLGRILNVIGEPVDEQGPVETDTTWEIHRPTPEFVDQSTKVEAFETGIKVVDLLAPYARGGKIGLFGGAGVGKTVLIMELIHNIAKKHGGFSVFAGVGERTREGNDLWNEMKESNVLDKTALVYGQMNEPPGARARVALSALTVAEYFRDQENQDVLLFVDNIFRFTQAGSEVSALLGRIPSAVGYQPTLSTEMGELQERITTTKHGSITSVQAIYVPADDLTDPAPATTFAHLDATTVLSRQIAELGIYPAVDPLDSSSRILDPQVLGEEHYQVARDVQYVLQRYKDLQDIIAILGMDELSEEDKQTVSRARKIQRFLSQPFHVAEIFTGTPGKYVELSETIRGFKEIVEGKHDSVPEQAFYMAGGIDEVLENAAKMAS</sequence>
<organism>
    <name type="scientific">Syntrophotalea carbinolica (strain DSM 2380 / NBRC 103641 / GraBd1)</name>
    <name type="common">Pelobacter carbinolicus</name>
    <dbReference type="NCBI Taxonomy" id="338963"/>
    <lineage>
        <taxon>Bacteria</taxon>
        <taxon>Pseudomonadati</taxon>
        <taxon>Thermodesulfobacteriota</taxon>
        <taxon>Desulfuromonadia</taxon>
        <taxon>Desulfuromonadales</taxon>
        <taxon>Syntrophotaleaceae</taxon>
        <taxon>Syntrophotalea</taxon>
    </lineage>
</organism>
<feature type="chain" id="PRO_0000254326" description="ATP synthase subunit beta 3">
    <location>
        <begin position="1"/>
        <end position="468"/>
    </location>
</feature>
<feature type="binding site" evidence="1">
    <location>
        <begin position="155"/>
        <end position="162"/>
    </location>
    <ligand>
        <name>ATP</name>
        <dbReference type="ChEBI" id="CHEBI:30616"/>
    </ligand>
</feature>
<keyword id="KW-0066">ATP synthesis</keyword>
<keyword id="KW-0067">ATP-binding</keyword>
<keyword id="KW-0997">Cell inner membrane</keyword>
<keyword id="KW-1003">Cell membrane</keyword>
<keyword id="KW-0139">CF(1)</keyword>
<keyword id="KW-0375">Hydrogen ion transport</keyword>
<keyword id="KW-0406">Ion transport</keyword>
<keyword id="KW-0472">Membrane</keyword>
<keyword id="KW-0547">Nucleotide-binding</keyword>
<keyword id="KW-1185">Reference proteome</keyword>
<keyword id="KW-1278">Translocase</keyword>
<keyword id="KW-0813">Transport</keyword>
<reference key="1">
    <citation type="submission" date="2005-10" db="EMBL/GenBank/DDBJ databases">
        <title>Complete sequence of Pelobacter carbinolicus DSM 2380.</title>
        <authorList>
            <person name="Copeland A."/>
            <person name="Lucas S."/>
            <person name="Lapidus A."/>
            <person name="Barry K."/>
            <person name="Detter J.C."/>
            <person name="Glavina T."/>
            <person name="Hammon N."/>
            <person name="Israni S."/>
            <person name="Pitluck S."/>
            <person name="Chertkov O."/>
            <person name="Schmutz J."/>
            <person name="Larimer F."/>
            <person name="Land M."/>
            <person name="Kyrpides N."/>
            <person name="Ivanova N."/>
            <person name="Richardson P."/>
        </authorList>
    </citation>
    <scope>NUCLEOTIDE SEQUENCE [LARGE SCALE GENOMIC DNA]</scope>
    <source>
        <strain>DSM 2380 / NBRC 103641 / GraBd1</strain>
    </source>
</reference>
<accession>Q39ZU1</accession>